<evidence type="ECO:0000255" key="1">
    <source>
        <dbReference type="HAMAP-Rule" id="MF_00456"/>
    </source>
</evidence>
<name>PROB_KOSOT</name>
<feature type="chain" id="PRO_1000206272" description="Glutamate 5-kinase">
    <location>
        <begin position="1"/>
        <end position="359"/>
    </location>
</feature>
<feature type="domain" description="PUA" evidence="1">
    <location>
        <begin position="266"/>
        <end position="343"/>
    </location>
</feature>
<feature type="binding site" evidence="1">
    <location>
        <position position="7"/>
    </location>
    <ligand>
        <name>ATP</name>
        <dbReference type="ChEBI" id="CHEBI:30616"/>
    </ligand>
</feature>
<feature type="binding site" evidence="1">
    <location>
        <position position="47"/>
    </location>
    <ligand>
        <name>substrate</name>
    </ligand>
</feature>
<feature type="binding site" evidence="1">
    <location>
        <position position="135"/>
    </location>
    <ligand>
        <name>substrate</name>
    </ligand>
</feature>
<feature type="binding site" evidence="1">
    <location>
        <position position="147"/>
    </location>
    <ligand>
        <name>substrate</name>
    </ligand>
</feature>
<feature type="binding site" evidence="1">
    <location>
        <begin position="202"/>
        <end position="208"/>
    </location>
    <ligand>
        <name>ATP</name>
        <dbReference type="ChEBI" id="CHEBI:30616"/>
    </ligand>
</feature>
<organism>
    <name type="scientific">Kosmotoga olearia (strain ATCC BAA-1733 / DSM 21960 / TBF 19.5.1)</name>
    <dbReference type="NCBI Taxonomy" id="521045"/>
    <lineage>
        <taxon>Bacteria</taxon>
        <taxon>Thermotogati</taxon>
        <taxon>Thermotogota</taxon>
        <taxon>Thermotogae</taxon>
        <taxon>Kosmotogales</taxon>
        <taxon>Kosmotogaceae</taxon>
        <taxon>Kosmotoga</taxon>
    </lineage>
</organism>
<reference key="1">
    <citation type="submission" date="2009-06" db="EMBL/GenBank/DDBJ databases">
        <title>Complete sequence of Thermotogales bacterium TBF 19.5.1.</title>
        <authorList>
            <consortium name="US DOE Joint Genome Institute"/>
            <person name="Lucas S."/>
            <person name="Copeland A."/>
            <person name="Lapidus A."/>
            <person name="Glavina del Rio T."/>
            <person name="Tice H."/>
            <person name="Bruce D."/>
            <person name="Goodwin L."/>
            <person name="Pitluck S."/>
            <person name="Chertkov O."/>
            <person name="Brettin T."/>
            <person name="Detter J.C."/>
            <person name="Han C."/>
            <person name="Schmutz J."/>
            <person name="Larimer F."/>
            <person name="Land M."/>
            <person name="Hauser L."/>
            <person name="Kyrpides N."/>
            <person name="Ovchinnikova G."/>
            <person name="Noll K."/>
        </authorList>
    </citation>
    <scope>NUCLEOTIDE SEQUENCE [LARGE SCALE GENOMIC DNA]</scope>
    <source>
        <strain>ATCC BAA-1733 / DSM 21960 / TBF 19.5.1</strain>
    </source>
</reference>
<comment type="function">
    <text evidence="1">Catalyzes the transfer of a phosphate group to glutamate to form L-glutamate 5-phosphate.</text>
</comment>
<comment type="catalytic activity">
    <reaction evidence="1">
        <text>L-glutamate + ATP = L-glutamyl 5-phosphate + ADP</text>
        <dbReference type="Rhea" id="RHEA:14877"/>
        <dbReference type="ChEBI" id="CHEBI:29985"/>
        <dbReference type="ChEBI" id="CHEBI:30616"/>
        <dbReference type="ChEBI" id="CHEBI:58274"/>
        <dbReference type="ChEBI" id="CHEBI:456216"/>
        <dbReference type="EC" id="2.7.2.11"/>
    </reaction>
</comment>
<comment type="pathway">
    <text evidence="1">Amino-acid biosynthesis; L-proline biosynthesis; L-glutamate 5-semialdehyde from L-glutamate: step 1/2.</text>
</comment>
<comment type="subcellular location">
    <subcellularLocation>
        <location evidence="1">Cytoplasm</location>
    </subcellularLocation>
</comment>
<comment type="similarity">
    <text evidence="1">Belongs to the glutamate 5-kinase family.</text>
</comment>
<keyword id="KW-0028">Amino-acid biosynthesis</keyword>
<keyword id="KW-0067">ATP-binding</keyword>
<keyword id="KW-0963">Cytoplasm</keyword>
<keyword id="KW-0418">Kinase</keyword>
<keyword id="KW-0547">Nucleotide-binding</keyword>
<keyword id="KW-0641">Proline biosynthesis</keyword>
<keyword id="KW-1185">Reference proteome</keyword>
<keyword id="KW-0808">Transferase</keyword>
<protein>
    <recommendedName>
        <fullName evidence="1">Glutamate 5-kinase</fullName>
        <ecNumber evidence="1">2.7.2.11</ecNumber>
    </recommendedName>
    <alternativeName>
        <fullName evidence="1">Gamma-glutamyl kinase</fullName>
        <shortName evidence="1">GK</shortName>
    </alternativeName>
</protein>
<proteinExistence type="inferred from homology"/>
<dbReference type="EC" id="2.7.2.11" evidence="1"/>
<dbReference type="EMBL" id="CP001634">
    <property type="protein sequence ID" value="ACR80112.1"/>
    <property type="molecule type" value="Genomic_DNA"/>
</dbReference>
<dbReference type="RefSeq" id="WP_015868759.1">
    <property type="nucleotide sequence ID" value="NC_012785.1"/>
</dbReference>
<dbReference type="SMR" id="C5CE10"/>
<dbReference type="STRING" id="521045.Kole_1419"/>
<dbReference type="KEGG" id="kol:Kole_1419"/>
<dbReference type="eggNOG" id="COG0263">
    <property type="taxonomic scope" value="Bacteria"/>
</dbReference>
<dbReference type="HOGENOM" id="CLU_025400_2_0_0"/>
<dbReference type="OrthoDB" id="9804434at2"/>
<dbReference type="UniPathway" id="UPA00098">
    <property type="reaction ID" value="UER00359"/>
</dbReference>
<dbReference type="Proteomes" id="UP000002382">
    <property type="component" value="Chromosome"/>
</dbReference>
<dbReference type="GO" id="GO:0005829">
    <property type="term" value="C:cytosol"/>
    <property type="evidence" value="ECO:0007669"/>
    <property type="project" value="TreeGrafter"/>
</dbReference>
<dbReference type="GO" id="GO:0005524">
    <property type="term" value="F:ATP binding"/>
    <property type="evidence" value="ECO:0007669"/>
    <property type="project" value="UniProtKB-KW"/>
</dbReference>
<dbReference type="GO" id="GO:0004349">
    <property type="term" value="F:glutamate 5-kinase activity"/>
    <property type="evidence" value="ECO:0007669"/>
    <property type="project" value="UniProtKB-UniRule"/>
</dbReference>
<dbReference type="GO" id="GO:0003723">
    <property type="term" value="F:RNA binding"/>
    <property type="evidence" value="ECO:0007669"/>
    <property type="project" value="InterPro"/>
</dbReference>
<dbReference type="GO" id="GO:0055129">
    <property type="term" value="P:L-proline biosynthetic process"/>
    <property type="evidence" value="ECO:0007669"/>
    <property type="project" value="UniProtKB-UniRule"/>
</dbReference>
<dbReference type="CDD" id="cd04242">
    <property type="entry name" value="AAK_G5K_ProB"/>
    <property type="match status" value="1"/>
</dbReference>
<dbReference type="CDD" id="cd21157">
    <property type="entry name" value="PUA_G5K"/>
    <property type="match status" value="1"/>
</dbReference>
<dbReference type="FunFam" id="3.40.1160.10:FF:000006">
    <property type="entry name" value="Glutamate 5-kinase"/>
    <property type="match status" value="1"/>
</dbReference>
<dbReference type="Gene3D" id="3.40.1160.10">
    <property type="entry name" value="Acetylglutamate kinase-like"/>
    <property type="match status" value="1"/>
</dbReference>
<dbReference type="Gene3D" id="2.30.130.10">
    <property type="entry name" value="PUA domain"/>
    <property type="match status" value="1"/>
</dbReference>
<dbReference type="HAMAP" id="MF_00456">
    <property type="entry name" value="ProB"/>
    <property type="match status" value="1"/>
</dbReference>
<dbReference type="InterPro" id="IPR036393">
    <property type="entry name" value="AceGlu_kinase-like_sf"/>
</dbReference>
<dbReference type="InterPro" id="IPR001048">
    <property type="entry name" value="Asp/Glu/Uridylate_kinase"/>
</dbReference>
<dbReference type="InterPro" id="IPR041739">
    <property type="entry name" value="G5K_ProB"/>
</dbReference>
<dbReference type="InterPro" id="IPR001057">
    <property type="entry name" value="Glu/AcGlu_kinase"/>
</dbReference>
<dbReference type="InterPro" id="IPR011529">
    <property type="entry name" value="Glu_5kinase"/>
</dbReference>
<dbReference type="InterPro" id="IPR005715">
    <property type="entry name" value="Glu_5kinase/COase_Synthase"/>
</dbReference>
<dbReference type="InterPro" id="IPR019797">
    <property type="entry name" value="Glutamate_5-kinase_CS"/>
</dbReference>
<dbReference type="InterPro" id="IPR002478">
    <property type="entry name" value="PUA"/>
</dbReference>
<dbReference type="InterPro" id="IPR015947">
    <property type="entry name" value="PUA-like_sf"/>
</dbReference>
<dbReference type="InterPro" id="IPR036974">
    <property type="entry name" value="PUA_sf"/>
</dbReference>
<dbReference type="NCBIfam" id="TIGR01027">
    <property type="entry name" value="proB"/>
    <property type="match status" value="1"/>
</dbReference>
<dbReference type="PANTHER" id="PTHR43654">
    <property type="entry name" value="GLUTAMATE 5-KINASE"/>
    <property type="match status" value="1"/>
</dbReference>
<dbReference type="PANTHER" id="PTHR43654:SF1">
    <property type="entry name" value="ISOPENTENYL PHOSPHATE KINASE"/>
    <property type="match status" value="1"/>
</dbReference>
<dbReference type="Pfam" id="PF00696">
    <property type="entry name" value="AA_kinase"/>
    <property type="match status" value="1"/>
</dbReference>
<dbReference type="Pfam" id="PF01472">
    <property type="entry name" value="PUA"/>
    <property type="match status" value="1"/>
</dbReference>
<dbReference type="PIRSF" id="PIRSF000729">
    <property type="entry name" value="GK"/>
    <property type="match status" value="1"/>
</dbReference>
<dbReference type="PRINTS" id="PR00474">
    <property type="entry name" value="GLU5KINASE"/>
</dbReference>
<dbReference type="SMART" id="SM00359">
    <property type="entry name" value="PUA"/>
    <property type="match status" value="1"/>
</dbReference>
<dbReference type="SUPFAM" id="SSF53633">
    <property type="entry name" value="Carbamate kinase-like"/>
    <property type="match status" value="1"/>
</dbReference>
<dbReference type="SUPFAM" id="SSF88697">
    <property type="entry name" value="PUA domain-like"/>
    <property type="match status" value="1"/>
</dbReference>
<dbReference type="PROSITE" id="PS00902">
    <property type="entry name" value="GLUTAMATE_5_KINASE"/>
    <property type="match status" value="1"/>
</dbReference>
<dbReference type="PROSITE" id="PS50890">
    <property type="entry name" value="PUA"/>
    <property type="match status" value="1"/>
</dbReference>
<sequence length="359" mass="39174">MAKITIKVGSNLLVQQDGQLDKRYIVELCREIGNLMSEGHQVVLVSSGARAAGYGYLNKSNAQEADLYMKQALCAVGQVQLMKLYESAMSFYGIKVAQILLTREDFSHRKRFLNLRNTLIGLTEMGILPIVNENDSVATEEIMFGDNDVLASMFAIGWNADYLLLMTSVDGVIDQNGKVIPFYREDTTNMAIAKNASSRWGSGGITSKIRAARAAAAAGIQTSICNGKKLENIAQFVLTGQTGTVFERVGPIKAKKAWIGFLSKPKGSIFINEGAKIAIENNRSLLPVGVVHIEGDFQAGDVVEIRLDDGTFLGKGIINFSSAEAKKIVGLKSDQLEDVLGYSCSKVLIHIDNLWKRDN</sequence>
<accession>C5CE10</accession>
<gene>
    <name evidence="1" type="primary">proB</name>
    <name type="ordered locus">Kole_1419</name>
</gene>